<organism>
    <name type="scientific">Mus musculus</name>
    <name type="common">Mouse</name>
    <dbReference type="NCBI Taxonomy" id="10090"/>
    <lineage>
        <taxon>Eukaryota</taxon>
        <taxon>Metazoa</taxon>
        <taxon>Chordata</taxon>
        <taxon>Craniata</taxon>
        <taxon>Vertebrata</taxon>
        <taxon>Euteleostomi</taxon>
        <taxon>Mammalia</taxon>
        <taxon>Eutheria</taxon>
        <taxon>Euarchontoglires</taxon>
        <taxon>Glires</taxon>
        <taxon>Rodentia</taxon>
        <taxon>Myomorpha</taxon>
        <taxon>Muroidea</taxon>
        <taxon>Muridae</taxon>
        <taxon>Murinae</taxon>
        <taxon>Mus</taxon>
        <taxon>Mus</taxon>
    </lineage>
</organism>
<comment type="function">
    <text evidence="1 2">Peroxisomal protease that mediates both the removal of the leader peptide from proteins containing a PTS2 target sequence and processes several PTS1-containing proteins. Catalyzes the processing of PTS1-proteins involved in the peroxisomal beta-oxidation of fatty acids (By similarity).</text>
</comment>
<comment type="activity regulation">
    <text evidence="2">Inhibited by N-ethylmaleimide (NEM). Not affected by leupeptin or trans-epoxysuccinyl-l-leucylamido-(4-gianidino) butane (E64).</text>
</comment>
<comment type="subunit">
    <text evidence="1">Homodimer. Forms a heterodimer with the C-terminal cleavage product (49 kDa form). Forms a heterodimer with the N-terminal cleavage product (10 kDa form). Interacts with PEX5. Interacts with LONP2.</text>
</comment>
<comment type="subcellular location">
    <subcellularLocation>
        <location evidence="2">Peroxisome</location>
    </subcellularLocation>
</comment>
<comment type="induction">
    <text evidence="2">By the proliferator-activated receptor alpha agonist bezafibrate.</text>
</comment>
<comment type="PTM">
    <text evidence="2">Self-cleavage gives rise to an N-terminal 10-kDa fragment and C-terminal 49-kDa fragment upon import into the peroxisomes. The full-lengh TYSND1 is the active the proteolytic processing of PTS1- and PTS2-proteins and in self-cleavage, and intermolecular self-cleavage of TYSND1 down-regulates its protease activity.</text>
</comment>
<comment type="similarity">
    <text evidence="3">Belongs to the peptidase S1B family.</text>
</comment>
<proteinExistence type="evidence at protein level"/>
<gene>
    <name type="primary">Tysnd1</name>
</gene>
<evidence type="ECO:0000250" key="1"/>
<evidence type="ECO:0000269" key="2">
    <source>
    </source>
</evidence>
<evidence type="ECO:0000305" key="3"/>
<name>TYSD1_MOUSE</name>
<protein>
    <recommendedName>
        <fullName>Peroxisomal leader peptide-processing protease</fullName>
        <ecNumber>3.4.21.-</ecNumber>
    </recommendedName>
    <alternativeName>
        <fullName>Trypsin domain-containing protein 1</fullName>
    </alternativeName>
    <component>
        <recommendedName>
            <fullName>Peroxisomal leader peptide-processing protease, 10 kDa form</fullName>
        </recommendedName>
    </component>
    <component>
        <recommendedName>
            <fullName>Peroxisomal leader peptide-processing protease, 49 kDa form</fullName>
        </recommendedName>
    </component>
</protein>
<sequence length="568" mass="59066">MGRQWGPSMRVAEQAGCVVSASRAGQPDAGSWSCSGVILSRNPGLVLCHGGIFTPFLRTGSAALTQTGTAFLPGDSCSDDLRLHVQWGPTAASPAGRADQELPGLCTPQCASLGLEPGAPSRARARPLQPPRPAQLLLLLSCPAFRSHFARLFGADAVDQWHFVSSAPDDAVSEEEEEDQLRALGWFALLRVQRGAAAEERRGPVVTVAPLGAVVKGAPLLACGSPFGAFCPDIFLNTLSRGVLSNAAGPLLLTDARCLPGTEGGGVFAARPAGALVALVAAPLCWKAREWVGLTLLCAAAPLLQVARWALARLHPGSASLSVLLPPPDVSTPRGLPLRDLGPPWAAAAVLVECGTVWGSGVVVAPRLVVTCRHVAPREAARVLVHSATPKNVAIWGQVVFATQETSPYDIAVVSLEEELNGVPTPVPAGHFHEGEPVSVVGFGVFGQACGPSVTSGILSAVVRVDGSPVMLQTTCAVHGGSSGGPLFSSGSGDLLGIVASNTRDNNTGATYPHLNFSIPITVLQPALKQYSQTGDLGGLRELDHTTEPVRVVWRLQRPLSEVPRSKL</sequence>
<accession>Q9DBA6</accession>
<accession>Q0VE90</accession>
<dbReference type="EC" id="3.4.21.-"/>
<dbReference type="EMBL" id="AK005069">
    <property type="protein sequence ID" value="BAB23793.1"/>
    <property type="molecule type" value="mRNA"/>
</dbReference>
<dbReference type="EMBL" id="AK154513">
    <property type="protein sequence ID" value="BAE32642.1"/>
    <property type="molecule type" value="mRNA"/>
</dbReference>
<dbReference type="EMBL" id="BC119320">
    <property type="protein sequence ID" value="AAI19321.2"/>
    <property type="molecule type" value="mRNA"/>
</dbReference>
<dbReference type="CCDS" id="CCDS48575.1"/>
<dbReference type="RefSeq" id="NP_001259019.1">
    <property type="nucleotide sequence ID" value="NM_001272090.1"/>
</dbReference>
<dbReference type="RefSeq" id="NP_001259020.1">
    <property type="nucleotide sequence ID" value="NM_001272091.1"/>
</dbReference>
<dbReference type="RefSeq" id="NP_001259021.1">
    <property type="nucleotide sequence ID" value="NM_001272092.1"/>
</dbReference>
<dbReference type="RefSeq" id="NP_082188.1">
    <property type="nucleotide sequence ID" value="NM_027912.1"/>
</dbReference>
<dbReference type="SMR" id="Q9DBA6"/>
<dbReference type="BioGRID" id="214911">
    <property type="interactions" value="2"/>
</dbReference>
<dbReference type="FunCoup" id="Q9DBA6">
    <property type="interactions" value="615"/>
</dbReference>
<dbReference type="STRING" id="10090.ENSMUSP00000020284"/>
<dbReference type="MEROPS" id="S01.286"/>
<dbReference type="GlyGen" id="Q9DBA6">
    <property type="glycosylation" value="1 site"/>
</dbReference>
<dbReference type="iPTMnet" id="Q9DBA6"/>
<dbReference type="PhosphoSitePlus" id="Q9DBA6"/>
<dbReference type="SwissPalm" id="Q9DBA6"/>
<dbReference type="jPOST" id="Q9DBA6"/>
<dbReference type="PaxDb" id="10090-ENSMUSP00000020284"/>
<dbReference type="PeptideAtlas" id="Q9DBA6"/>
<dbReference type="ProteomicsDB" id="298050"/>
<dbReference type="Pumba" id="Q9DBA6"/>
<dbReference type="Antibodypedia" id="48786">
    <property type="antibodies" value="67 antibodies from 17 providers"/>
</dbReference>
<dbReference type="DNASU" id="71767"/>
<dbReference type="Ensembl" id="ENSMUST00000020284.5">
    <property type="protein sequence ID" value="ENSMUSP00000020284.5"/>
    <property type="gene ID" value="ENSMUSG00000020087.6"/>
</dbReference>
<dbReference type="GeneID" id="71767"/>
<dbReference type="KEGG" id="mmu:71767"/>
<dbReference type="UCSC" id="uc007fgh.2">
    <property type="organism name" value="mouse"/>
</dbReference>
<dbReference type="AGR" id="MGI:1919017"/>
<dbReference type="CTD" id="219743"/>
<dbReference type="MGI" id="MGI:1919017">
    <property type="gene designation" value="Tysnd1"/>
</dbReference>
<dbReference type="VEuPathDB" id="HostDB:ENSMUSG00000020087"/>
<dbReference type="eggNOG" id="KOG1320">
    <property type="taxonomic scope" value="Eukaryota"/>
</dbReference>
<dbReference type="GeneTree" id="ENSGT00390000014627"/>
<dbReference type="HOGENOM" id="CLU_034855_1_0_1"/>
<dbReference type="InParanoid" id="Q9DBA6"/>
<dbReference type="OMA" id="GGPMFDQ"/>
<dbReference type="OrthoDB" id="17845at2759"/>
<dbReference type="PhylomeDB" id="Q9DBA6"/>
<dbReference type="TreeFam" id="TF331254"/>
<dbReference type="Reactome" id="R-MMU-9033241">
    <property type="pathway name" value="Peroxisomal protein import"/>
</dbReference>
<dbReference type="Reactome" id="R-MMU-9033500">
    <property type="pathway name" value="TYSND1 cleaves peroxisomal proteins"/>
</dbReference>
<dbReference type="BioGRID-ORCS" id="71767">
    <property type="hits" value="3 hits in 77 CRISPR screens"/>
</dbReference>
<dbReference type="PRO" id="PR:Q9DBA6"/>
<dbReference type="Proteomes" id="UP000000589">
    <property type="component" value="Chromosome 10"/>
</dbReference>
<dbReference type="RNAct" id="Q9DBA6">
    <property type="molecule type" value="protein"/>
</dbReference>
<dbReference type="Bgee" id="ENSMUSG00000020087">
    <property type="expression patterns" value="Expressed in right kidney and 265 other cell types or tissues"/>
</dbReference>
<dbReference type="ExpressionAtlas" id="Q9DBA6">
    <property type="expression patterns" value="baseline and differential"/>
</dbReference>
<dbReference type="GO" id="GO:0005782">
    <property type="term" value="C:peroxisomal matrix"/>
    <property type="evidence" value="ECO:0000304"/>
    <property type="project" value="Reactome"/>
</dbReference>
<dbReference type="GO" id="GO:0005777">
    <property type="term" value="C:peroxisome"/>
    <property type="evidence" value="ECO:0000250"/>
    <property type="project" value="UniProtKB"/>
</dbReference>
<dbReference type="GO" id="GO:0002020">
    <property type="term" value="F:protease binding"/>
    <property type="evidence" value="ECO:0007669"/>
    <property type="project" value="Ensembl"/>
</dbReference>
<dbReference type="GO" id="GO:0004252">
    <property type="term" value="F:serine-type endopeptidase activity"/>
    <property type="evidence" value="ECO:0000269"/>
    <property type="project" value="Reactome"/>
</dbReference>
<dbReference type="GO" id="GO:0016485">
    <property type="term" value="P:protein processing"/>
    <property type="evidence" value="ECO:0000250"/>
    <property type="project" value="UniProtKB"/>
</dbReference>
<dbReference type="GO" id="GO:0006508">
    <property type="term" value="P:proteolysis"/>
    <property type="evidence" value="ECO:0000250"/>
    <property type="project" value="UniProtKB"/>
</dbReference>
<dbReference type="GO" id="GO:0031998">
    <property type="term" value="P:regulation of fatty acid beta-oxidation"/>
    <property type="evidence" value="ECO:0000250"/>
    <property type="project" value="UniProtKB"/>
</dbReference>
<dbReference type="FunFam" id="2.40.10.10:FF:000080">
    <property type="entry name" value="peroxisomal leader peptide-processing protease"/>
    <property type="match status" value="1"/>
</dbReference>
<dbReference type="Gene3D" id="2.40.10.10">
    <property type="entry name" value="Trypsin-like serine proteases"/>
    <property type="match status" value="2"/>
</dbReference>
<dbReference type="InterPro" id="IPR017345">
    <property type="entry name" value="Pept_S1A_Tysnd1"/>
</dbReference>
<dbReference type="InterPro" id="IPR009003">
    <property type="entry name" value="Peptidase_S1_PA"/>
</dbReference>
<dbReference type="InterPro" id="IPR043504">
    <property type="entry name" value="Peptidase_S1_PA_chymotrypsin"/>
</dbReference>
<dbReference type="InterPro" id="IPR039245">
    <property type="entry name" value="TYSND1/DEG15"/>
</dbReference>
<dbReference type="PANTHER" id="PTHR21004:SF0">
    <property type="entry name" value="PEROXISOMAL LEADER PEPTIDE-PROCESSING PROTEASE"/>
    <property type="match status" value="1"/>
</dbReference>
<dbReference type="PANTHER" id="PTHR21004">
    <property type="entry name" value="SERINE PROTEASE-RELATED"/>
    <property type="match status" value="1"/>
</dbReference>
<dbReference type="Pfam" id="PF13365">
    <property type="entry name" value="Trypsin_2"/>
    <property type="match status" value="1"/>
</dbReference>
<dbReference type="PIRSF" id="PIRSF037989">
    <property type="entry name" value="Peptidase_S1B_Tysnd1"/>
    <property type="match status" value="1"/>
</dbReference>
<dbReference type="SUPFAM" id="SSF50494">
    <property type="entry name" value="Trypsin-like serine proteases"/>
    <property type="match status" value="2"/>
</dbReference>
<reference key="1">
    <citation type="journal article" date="2005" name="Science">
        <title>The transcriptional landscape of the mammalian genome.</title>
        <authorList>
            <person name="Carninci P."/>
            <person name="Kasukawa T."/>
            <person name="Katayama S."/>
            <person name="Gough J."/>
            <person name="Frith M.C."/>
            <person name="Maeda N."/>
            <person name="Oyama R."/>
            <person name="Ravasi T."/>
            <person name="Lenhard B."/>
            <person name="Wells C."/>
            <person name="Kodzius R."/>
            <person name="Shimokawa K."/>
            <person name="Bajic V.B."/>
            <person name="Brenner S.E."/>
            <person name="Batalov S."/>
            <person name="Forrest A.R."/>
            <person name="Zavolan M."/>
            <person name="Davis M.J."/>
            <person name="Wilming L.G."/>
            <person name="Aidinis V."/>
            <person name="Allen J.E."/>
            <person name="Ambesi-Impiombato A."/>
            <person name="Apweiler R."/>
            <person name="Aturaliya R.N."/>
            <person name="Bailey T.L."/>
            <person name="Bansal M."/>
            <person name="Baxter L."/>
            <person name="Beisel K.W."/>
            <person name="Bersano T."/>
            <person name="Bono H."/>
            <person name="Chalk A.M."/>
            <person name="Chiu K.P."/>
            <person name="Choudhary V."/>
            <person name="Christoffels A."/>
            <person name="Clutterbuck D.R."/>
            <person name="Crowe M.L."/>
            <person name="Dalla E."/>
            <person name="Dalrymple B.P."/>
            <person name="de Bono B."/>
            <person name="Della Gatta G."/>
            <person name="di Bernardo D."/>
            <person name="Down T."/>
            <person name="Engstrom P."/>
            <person name="Fagiolini M."/>
            <person name="Faulkner G."/>
            <person name="Fletcher C.F."/>
            <person name="Fukushima T."/>
            <person name="Furuno M."/>
            <person name="Futaki S."/>
            <person name="Gariboldi M."/>
            <person name="Georgii-Hemming P."/>
            <person name="Gingeras T.R."/>
            <person name="Gojobori T."/>
            <person name="Green R.E."/>
            <person name="Gustincich S."/>
            <person name="Harbers M."/>
            <person name="Hayashi Y."/>
            <person name="Hensch T.K."/>
            <person name="Hirokawa N."/>
            <person name="Hill D."/>
            <person name="Huminiecki L."/>
            <person name="Iacono M."/>
            <person name="Ikeo K."/>
            <person name="Iwama A."/>
            <person name="Ishikawa T."/>
            <person name="Jakt M."/>
            <person name="Kanapin A."/>
            <person name="Katoh M."/>
            <person name="Kawasawa Y."/>
            <person name="Kelso J."/>
            <person name="Kitamura H."/>
            <person name="Kitano H."/>
            <person name="Kollias G."/>
            <person name="Krishnan S.P."/>
            <person name="Kruger A."/>
            <person name="Kummerfeld S.K."/>
            <person name="Kurochkin I.V."/>
            <person name="Lareau L.F."/>
            <person name="Lazarevic D."/>
            <person name="Lipovich L."/>
            <person name="Liu J."/>
            <person name="Liuni S."/>
            <person name="McWilliam S."/>
            <person name="Madan Babu M."/>
            <person name="Madera M."/>
            <person name="Marchionni L."/>
            <person name="Matsuda H."/>
            <person name="Matsuzawa S."/>
            <person name="Miki H."/>
            <person name="Mignone F."/>
            <person name="Miyake S."/>
            <person name="Morris K."/>
            <person name="Mottagui-Tabar S."/>
            <person name="Mulder N."/>
            <person name="Nakano N."/>
            <person name="Nakauchi H."/>
            <person name="Ng P."/>
            <person name="Nilsson R."/>
            <person name="Nishiguchi S."/>
            <person name="Nishikawa S."/>
            <person name="Nori F."/>
            <person name="Ohara O."/>
            <person name="Okazaki Y."/>
            <person name="Orlando V."/>
            <person name="Pang K.C."/>
            <person name="Pavan W.J."/>
            <person name="Pavesi G."/>
            <person name="Pesole G."/>
            <person name="Petrovsky N."/>
            <person name="Piazza S."/>
            <person name="Reed J."/>
            <person name="Reid J.F."/>
            <person name="Ring B.Z."/>
            <person name="Ringwald M."/>
            <person name="Rost B."/>
            <person name="Ruan Y."/>
            <person name="Salzberg S.L."/>
            <person name="Sandelin A."/>
            <person name="Schneider C."/>
            <person name="Schoenbach C."/>
            <person name="Sekiguchi K."/>
            <person name="Semple C.A."/>
            <person name="Seno S."/>
            <person name="Sessa L."/>
            <person name="Sheng Y."/>
            <person name="Shibata Y."/>
            <person name="Shimada H."/>
            <person name="Shimada K."/>
            <person name="Silva D."/>
            <person name="Sinclair B."/>
            <person name="Sperling S."/>
            <person name="Stupka E."/>
            <person name="Sugiura K."/>
            <person name="Sultana R."/>
            <person name="Takenaka Y."/>
            <person name="Taki K."/>
            <person name="Tammoja K."/>
            <person name="Tan S.L."/>
            <person name="Tang S."/>
            <person name="Taylor M.S."/>
            <person name="Tegner J."/>
            <person name="Teichmann S.A."/>
            <person name="Ueda H.R."/>
            <person name="van Nimwegen E."/>
            <person name="Verardo R."/>
            <person name="Wei C.L."/>
            <person name="Yagi K."/>
            <person name="Yamanishi H."/>
            <person name="Zabarovsky E."/>
            <person name="Zhu S."/>
            <person name="Zimmer A."/>
            <person name="Hide W."/>
            <person name="Bult C."/>
            <person name="Grimmond S.M."/>
            <person name="Teasdale R.D."/>
            <person name="Liu E.T."/>
            <person name="Brusic V."/>
            <person name="Quackenbush J."/>
            <person name="Wahlestedt C."/>
            <person name="Mattick J.S."/>
            <person name="Hume D.A."/>
            <person name="Kai C."/>
            <person name="Sasaki D."/>
            <person name="Tomaru Y."/>
            <person name="Fukuda S."/>
            <person name="Kanamori-Katayama M."/>
            <person name="Suzuki M."/>
            <person name="Aoki J."/>
            <person name="Arakawa T."/>
            <person name="Iida J."/>
            <person name="Imamura K."/>
            <person name="Itoh M."/>
            <person name="Kato T."/>
            <person name="Kawaji H."/>
            <person name="Kawagashira N."/>
            <person name="Kawashima T."/>
            <person name="Kojima M."/>
            <person name="Kondo S."/>
            <person name="Konno H."/>
            <person name="Nakano K."/>
            <person name="Ninomiya N."/>
            <person name="Nishio T."/>
            <person name="Okada M."/>
            <person name="Plessy C."/>
            <person name="Shibata K."/>
            <person name="Shiraki T."/>
            <person name="Suzuki S."/>
            <person name="Tagami M."/>
            <person name="Waki K."/>
            <person name="Watahiki A."/>
            <person name="Okamura-Oho Y."/>
            <person name="Suzuki H."/>
            <person name="Kawai J."/>
            <person name="Hayashizaki Y."/>
        </authorList>
    </citation>
    <scope>NUCLEOTIDE SEQUENCE [LARGE SCALE MRNA]</scope>
    <source>
        <strain>C57BL/6J</strain>
        <strain>NOD</strain>
        <tissue>Liver</tissue>
    </source>
</reference>
<reference key="2">
    <citation type="journal article" date="2004" name="Genome Res.">
        <title>The status, quality, and expansion of the NIH full-length cDNA project: the Mammalian Gene Collection (MGC).</title>
        <authorList>
            <consortium name="The MGC Project Team"/>
        </authorList>
    </citation>
    <scope>NUCLEOTIDE SEQUENCE [LARGE SCALE MRNA]</scope>
    <source>
        <tissue>Brain</tissue>
    </source>
</reference>
<reference key="3">
    <citation type="journal article" date="2007" name="EMBO J.">
        <title>Novel peroxisomal protease Tysnd1 processes PTS1- and PTS2-containing enzymes involved in beta-oxidation of fatty acids.</title>
        <authorList>
            <person name="Kurochkin I.V."/>
            <person name="Mizuno Y."/>
            <person name="Konagaya A."/>
            <person name="Sakaki Y."/>
            <person name="Schoenbach C."/>
            <person name="Okazaki Y."/>
        </authorList>
    </citation>
    <scope>PROTEIN SEQUENCE OF N-TERMINUS</scope>
    <scope>PROTEOLYTIC CLEAVAGE AT CYS-110</scope>
    <scope>FUNCTION</scope>
    <scope>ACTIVITY REGULATION</scope>
    <scope>SUBCELLULAR LOCATION</scope>
    <scope>INDUCTION</scope>
</reference>
<reference key="4">
    <citation type="journal article" date="2010" name="Cell">
        <title>A tissue-specific atlas of mouse protein phosphorylation and expression.</title>
        <authorList>
            <person name="Huttlin E.L."/>
            <person name="Jedrychowski M.P."/>
            <person name="Elias J.E."/>
            <person name="Goswami T."/>
            <person name="Rad R."/>
            <person name="Beausoleil S.A."/>
            <person name="Villen J."/>
            <person name="Haas W."/>
            <person name="Sowa M.E."/>
            <person name="Gygi S.P."/>
        </authorList>
    </citation>
    <scope>IDENTIFICATION BY MASS SPECTROMETRY [LARGE SCALE ANALYSIS]</scope>
    <source>
        <tissue>Liver</tissue>
    </source>
</reference>
<feature type="chain" id="PRO_0000286127" description="Peroxisomal leader peptide-processing protease">
    <location>
        <begin position="1"/>
        <end position="568"/>
    </location>
</feature>
<feature type="chain" id="PRO_0000286128" description="Peroxisomal leader peptide-processing protease, 10 kDa form">
    <location>
        <begin position="1"/>
        <end position="110"/>
    </location>
</feature>
<feature type="chain" id="PRO_0000286129" description="Peroxisomal leader peptide-processing protease, 49 kDa form">
    <location>
        <begin position="111"/>
        <end position="568"/>
    </location>
</feature>
<feature type="region of interest" description="Serine protease">
    <location>
        <begin position="332"/>
        <end position="568"/>
    </location>
</feature>
<feature type="active site" description="Charge relay system" evidence="1">
    <location>
        <position position="374"/>
    </location>
</feature>
<feature type="active site" description="Charge relay system" evidence="1">
    <location>
        <position position="410"/>
    </location>
</feature>
<feature type="active site" description="Charge relay system" evidence="1">
    <location>
        <position position="483"/>
    </location>
</feature>
<feature type="site" description="Cleavage" evidence="2">
    <location>
        <begin position="110"/>
        <end position="111"/>
    </location>
</feature>
<keyword id="KW-0903">Direct protein sequencing</keyword>
<keyword id="KW-0378">Hydrolase</keyword>
<keyword id="KW-0576">Peroxisome</keyword>
<keyword id="KW-0645">Protease</keyword>
<keyword id="KW-1185">Reference proteome</keyword>
<keyword id="KW-0720">Serine protease</keyword>